<reference key="1">
    <citation type="journal article" date="2008" name="PLoS ONE">
        <title>Genetic basis of virulence attenuation revealed by comparative genomic analysis of Mycobacterium tuberculosis strain H37Ra versus H37Rv.</title>
        <authorList>
            <person name="Zheng H."/>
            <person name="Lu L."/>
            <person name="Wang B."/>
            <person name="Pu S."/>
            <person name="Zhang X."/>
            <person name="Zhu G."/>
            <person name="Shi W."/>
            <person name="Zhang L."/>
            <person name="Wang H."/>
            <person name="Wang S."/>
            <person name="Zhao G."/>
            <person name="Zhang Y."/>
        </authorList>
    </citation>
    <scope>NUCLEOTIDE SEQUENCE [LARGE SCALE GENOMIC DNA]</scope>
    <source>
        <strain>ATCC 25177 / H37Ra</strain>
    </source>
</reference>
<evidence type="ECO:0000255" key="1">
    <source>
        <dbReference type="HAMAP-Rule" id="MF_00377"/>
    </source>
</evidence>
<evidence type="ECO:0000256" key="2">
    <source>
        <dbReference type="SAM" id="MobiDB-lite"/>
    </source>
</evidence>
<name>DNAA_MYCTA</name>
<proteinExistence type="inferred from homology"/>
<gene>
    <name evidence="1" type="primary">dnaA</name>
    <name type="ordered locus">MRA_0001</name>
</gene>
<accession>A5TY69</accession>
<organism>
    <name type="scientific">Mycobacterium tuberculosis (strain ATCC 25177 / H37Ra)</name>
    <dbReference type="NCBI Taxonomy" id="419947"/>
    <lineage>
        <taxon>Bacteria</taxon>
        <taxon>Bacillati</taxon>
        <taxon>Actinomycetota</taxon>
        <taxon>Actinomycetes</taxon>
        <taxon>Mycobacteriales</taxon>
        <taxon>Mycobacteriaceae</taxon>
        <taxon>Mycobacterium</taxon>
        <taxon>Mycobacterium tuberculosis complex</taxon>
    </lineage>
</organism>
<feature type="chain" id="PRO_1000048674" description="Chromosomal replication initiator protein DnaA">
    <location>
        <begin position="1"/>
        <end position="507"/>
    </location>
</feature>
<feature type="region of interest" description="Domain I, interacts with DnaA modulators" evidence="1">
    <location>
        <begin position="1"/>
        <end position="112"/>
    </location>
</feature>
<feature type="region of interest" description="Disordered" evidence="2">
    <location>
        <begin position="99"/>
        <end position="155"/>
    </location>
</feature>
<feature type="region of interest" description="Domain II" evidence="1">
    <location>
        <begin position="113"/>
        <end position="166"/>
    </location>
</feature>
<feature type="region of interest" description="Domain III, AAA+ region" evidence="1">
    <location>
        <begin position="167"/>
        <end position="383"/>
    </location>
</feature>
<feature type="region of interest" description="Domain IV, binds dsDNA" evidence="1">
    <location>
        <begin position="384"/>
        <end position="507"/>
    </location>
</feature>
<feature type="compositionally biased region" description="Polar residues" evidence="2">
    <location>
        <begin position="113"/>
        <end position="127"/>
    </location>
</feature>
<feature type="binding site" evidence="1">
    <location>
        <position position="211"/>
    </location>
    <ligand>
        <name>ATP</name>
        <dbReference type="ChEBI" id="CHEBI:30616"/>
    </ligand>
</feature>
<feature type="binding site" evidence="1">
    <location>
        <position position="213"/>
    </location>
    <ligand>
        <name>ATP</name>
        <dbReference type="ChEBI" id="CHEBI:30616"/>
    </ligand>
</feature>
<feature type="binding site" evidence="1">
    <location>
        <position position="214"/>
    </location>
    <ligand>
        <name>ATP</name>
        <dbReference type="ChEBI" id="CHEBI:30616"/>
    </ligand>
</feature>
<feature type="binding site" evidence="1">
    <location>
        <position position="215"/>
    </location>
    <ligand>
        <name>ATP</name>
        <dbReference type="ChEBI" id="CHEBI:30616"/>
    </ligand>
</feature>
<protein>
    <recommendedName>
        <fullName evidence="1">Chromosomal replication initiator protein DnaA</fullName>
    </recommendedName>
</protein>
<sequence>MTDDPGSGFTTVWNAVVSELNGDPKVDDGPSSDANLSAPLTPQQRAWLNLVQPLTIVEGFALLSVPSSFVQNEIERHLRAPITDALSRRLGHQIQLGVRIAPPATDEADDTTVPPSENPATTSPDTTTDNDEIDDSAAARGDNQHSWPSYFTERPHNTDSATAGVTSLNRRYTFDTFVIGASNRFAHAAALAIAEAPARAYNPLFIWGESGLGKTHLLHAAGNYAQRLFPGMRVKYVSTEEFTNDFINSLRDDRKVAFKRSYRDVDVLLVDDIQFIEGKEGIQEEFFHTFNTLHNANKQIVISSDRPPKQLATLEDRLRTRFEWGLITDVQPPELETRIAILRKKAQMERLAVPDDVLELIASSIERNIRELEGALIRVTAFASLNKTPIDKALAEIVLRDLIADANTMQISAATIMAATAEYFDTTVEELRGPGKTRALAQSRQIAMYLCRELTDLSLPKIGQAFGRDHTTVMYAQRKILSEMAERREVFDHVKELTTRIRQRSKR</sequence>
<dbReference type="EMBL" id="CP000611">
    <property type="protein sequence ID" value="ABQ71719.1"/>
    <property type="molecule type" value="Genomic_DNA"/>
</dbReference>
<dbReference type="RefSeq" id="WP_003400253.1">
    <property type="nucleotide sequence ID" value="NZ_CP016972.1"/>
</dbReference>
<dbReference type="SMR" id="A5TY69"/>
<dbReference type="GeneID" id="45423958"/>
<dbReference type="KEGG" id="mra:MRA_0001"/>
<dbReference type="eggNOG" id="COG0593">
    <property type="taxonomic scope" value="Bacteria"/>
</dbReference>
<dbReference type="HOGENOM" id="CLU_026910_2_0_11"/>
<dbReference type="EvolutionaryTrace" id="A5TY69"/>
<dbReference type="Proteomes" id="UP000001988">
    <property type="component" value="Chromosome"/>
</dbReference>
<dbReference type="GO" id="GO:0005737">
    <property type="term" value="C:cytoplasm"/>
    <property type="evidence" value="ECO:0007669"/>
    <property type="project" value="UniProtKB-SubCell"/>
</dbReference>
<dbReference type="GO" id="GO:0005886">
    <property type="term" value="C:plasma membrane"/>
    <property type="evidence" value="ECO:0007669"/>
    <property type="project" value="TreeGrafter"/>
</dbReference>
<dbReference type="GO" id="GO:0005524">
    <property type="term" value="F:ATP binding"/>
    <property type="evidence" value="ECO:0007669"/>
    <property type="project" value="UniProtKB-UniRule"/>
</dbReference>
<dbReference type="GO" id="GO:0016887">
    <property type="term" value="F:ATP hydrolysis activity"/>
    <property type="evidence" value="ECO:0007669"/>
    <property type="project" value="InterPro"/>
</dbReference>
<dbReference type="GO" id="GO:0003688">
    <property type="term" value="F:DNA replication origin binding"/>
    <property type="evidence" value="ECO:0007669"/>
    <property type="project" value="UniProtKB-UniRule"/>
</dbReference>
<dbReference type="GO" id="GO:0008289">
    <property type="term" value="F:lipid binding"/>
    <property type="evidence" value="ECO:0007669"/>
    <property type="project" value="UniProtKB-KW"/>
</dbReference>
<dbReference type="GO" id="GO:0006270">
    <property type="term" value="P:DNA replication initiation"/>
    <property type="evidence" value="ECO:0007669"/>
    <property type="project" value="UniProtKB-UniRule"/>
</dbReference>
<dbReference type="GO" id="GO:0006275">
    <property type="term" value="P:regulation of DNA replication"/>
    <property type="evidence" value="ECO:0007669"/>
    <property type="project" value="UniProtKB-UniRule"/>
</dbReference>
<dbReference type="CDD" id="cd00009">
    <property type="entry name" value="AAA"/>
    <property type="match status" value="1"/>
</dbReference>
<dbReference type="CDD" id="cd06571">
    <property type="entry name" value="Bac_DnaA_C"/>
    <property type="match status" value="1"/>
</dbReference>
<dbReference type="FunFam" id="1.10.1750.10:FF:000002">
    <property type="entry name" value="Chromosomal replication initiator protein DnaA"/>
    <property type="match status" value="1"/>
</dbReference>
<dbReference type="FunFam" id="1.10.8.60:FF:000003">
    <property type="entry name" value="Chromosomal replication initiator protein DnaA"/>
    <property type="match status" value="1"/>
</dbReference>
<dbReference type="FunFam" id="3.40.50.300:FF:000150">
    <property type="entry name" value="Chromosomal replication initiator protein DnaA"/>
    <property type="match status" value="1"/>
</dbReference>
<dbReference type="Gene3D" id="1.10.1750.10">
    <property type="match status" value="1"/>
</dbReference>
<dbReference type="Gene3D" id="1.10.8.60">
    <property type="match status" value="1"/>
</dbReference>
<dbReference type="Gene3D" id="3.30.300.180">
    <property type="match status" value="1"/>
</dbReference>
<dbReference type="Gene3D" id="3.40.50.300">
    <property type="entry name" value="P-loop containing nucleotide triphosphate hydrolases"/>
    <property type="match status" value="1"/>
</dbReference>
<dbReference type="HAMAP" id="MF_00377">
    <property type="entry name" value="DnaA_bact"/>
    <property type="match status" value="1"/>
</dbReference>
<dbReference type="InterPro" id="IPR003593">
    <property type="entry name" value="AAA+_ATPase"/>
</dbReference>
<dbReference type="InterPro" id="IPR001957">
    <property type="entry name" value="Chromosome_initiator_DnaA"/>
</dbReference>
<dbReference type="InterPro" id="IPR020591">
    <property type="entry name" value="Chromosome_initiator_DnaA-like"/>
</dbReference>
<dbReference type="InterPro" id="IPR018312">
    <property type="entry name" value="Chromosome_initiator_DnaA_CS"/>
</dbReference>
<dbReference type="InterPro" id="IPR013159">
    <property type="entry name" value="DnaA_C"/>
</dbReference>
<dbReference type="InterPro" id="IPR013317">
    <property type="entry name" value="DnaA_dom"/>
</dbReference>
<dbReference type="InterPro" id="IPR038454">
    <property type="entry name" value="DnaA_N_sf"/>
</dbReference>
<dbReference type="InterPro" id="IPR027417">
    <property type="entry name" value="P-loop_NTPase"/>
</dbReference>
<dbReference type="InterPro" id="IPR010921">
    <property type="entry name" value="Trp_repressor/repl_initiator"/>
</dbReference>
<dbReference type="NCBIfam" id="TIGR00362">
    <property type="entry name" value="DnaA"/>
    <property type="match status" value="1"/>
</dbReference>
<dbReference type="NCBIfam" id="NF010686">
    <property type="entry name" value="PRK14086.1"/>
    <property type="match status" value="1"/>
</dbReference>
<dbReference type="PANTHER" id="PTHR30050">
    <property type="entry name" value="CHROMOSOMAL REPLICATION INITIATOR PROTEIN DNAA"/>
    <property type="match status" value="1"/>
</dbReference>
<dbReference type="PANTHER" id="PTHR30050:SF2">
    <property type="entry name" value="CHROMOSOMAL REPLICATION INITIATOR PROTEIN DNAA"/>
    <property type="match status" value="1"/>
</dbReference>
<dbReference type="Pfam" id="PF00308">
    <property type="entry name" value="Bac_DnaA"/>
    <property type="match status" value="1"/>
</dbReference>
<dbReference type="Pfam" id="PF08299">
    <property type="entry name" value="Bac_DnaA_C"/>
    <property type="match status" value="1"/>
</dbReference>
<dbReference type="PRINTS" id="PR00051">
    <property type="entry name" value="DNAA"/>
</dbReference>
<dbReference type="SMART" id="SM00382">
    <property type="entry name" value="AAA"/>
    <property type="match status" value="1"/>
</dbReference>
<dbReference type="SMART" id="SM00760">
    <property type="entry name" value="Bac_DnaA_C"/>
    <property type="match status" value="1"/>
</dbReference>
<dbReference type="SUPFAM" id="SSF52540">
    <property type="entry name" value="P-loop containing nucleoside triphosphate hydrolases"/>
    <property type="match status" value="1"/>
</dbReference>
<dbReference type="SUPFAM" id="SSF48295">
    <property type="entry name" value="TrpR-like"/>
    <property type="match status" value="1"/>
</dbReference>
<dbReference type="PROSITE" id="PS01008">
    <property type="entry name" value="DNAA"/>
    <property type="match status" value="1"/>
</dbReference>
<keyword id="KW-0067">ATP-binding</keyword>
<keyword id="KW-0963">Cytoplasm</keyword>
<keyword id="KW-0235">DNA replication</keyword>
<keyword id="KW-0238">DNA-binding</keyword>
<keyword id="KW-0446">Lipid-binding</keyword>
<keyword id="KW-0547">Nucleotide-binding</keyword>
<keyword id="KW-1185">Reference proteome</keyword>
<comment type="function">
    <text evidence="1">Plays an essential role in the initiation and regulation of chromosomal replication. ATP-DnaA binds to the origin of replication (oriC) to initiate formation of the DNA replication initiation complex once per cell cycle. Binds the DnaA box (a 9 base pair repeat at the origin) and separates the double-stranded (ds)DNA. Forms a right-handed helical filament on oriC DNA; dsDNA binds to the exterior of the filament while single-stranded (ss)DNA is stabiized in the filament's interior. The ATP-DnaA-oriC complex binds and stabilizes one strand of the AT-rich DNA unwinding element (DUE), permitting loading of DNA polymerase. After initiation quickly degrades to an ADP-DnaA complex that is not apt for DNA replication. Binds acidic phospholipids.</text>
</comment>
<comment type="subunit">
    <text evidence="1">Oligomerizes as a right-handed, spiral filament on DNA at oriC.</text>
</comment>
<comment type="subcellular location">
    <subcellularLocation>
        <location evidence="1">Cytoplasm</location>
    </subcellularLocation>
</comment>
<comment type="domain">
    <text evidence="1">Domain I is involved in oligomerization and binding regulators, domain II is flexibile and of varying length in different bacteria, domain III forms the AAA+ region, while domain IV binds dsDNA.</text>
</comment>
<comment type="similarity">
    <text evidence="1">Belongs to the DnaA family.</text>
</comment>